<organismHost>
    <name type="scientific">Ornithodoros</name>
    <name type="common">relapsing fever ticks</name>
    <dbReference type="NCBI Taxonomy" id="6937"/>
</organismHost>
<organismHost>
    <name type="scientific">Phacochoerus aethiopicus</name>
    <name type="common">Warthog</name>
    <dbReference type="NCBI Taxonomy" id="85517"/>
</organismHost>
<organismHost>
    <name type="scientific">Phacochoerus africanus</name>
    <name type="common">Warthog</name>
    <dbReference type="NCBI Taxonomy" id="41426"/>
</organismHost>
<organismHost>
    <name type="scientific">Potamochoerus larvatus</name>
    <name type="common">Bushpig</name>
    <dbReference type="NCBI Taxonomy" id="273792"/>
</organismHost>
<organismHost>
    <name type="scientific">Sus scrofa</name>
    <name type="common">Pig</name>
    <dbReference type="NCBI Taxonomy" id="9823"/>
</organismHost>
<organism>
    <name type="scientific">African swine fever virus (isolate Tick/South Africa/Pretoriuskop Pr4/1996)</name>
    <name type="common">ASFV</name>
    <dbReference type="NCBI Taxonomy" id="561443"/>
    <lineage>
        <taxon>Viruses</taxon>
        <taxon>Varidnaviria</taxon>
        <taxon>Bamfordvirae</taxon>
        <taxon>Nucleocytoviricota</taxon>
        <taxon>Pokkesviricetes</taxon>
        <taxon>Asfuvirales</taxon>
        <taxon>Asfarviridae</taxon>
        <taxon>Asfivirus</taxon>
        <taxon>African swine fever virus</taxon>
    </lineage>
</organism>
<proteinExistence type="inferred from homology"/>
<accession>P0CA78</accession>
<dbReference type="EMBL" id="AY261363">
    <property type="status" value="NOT_ANNOTATED_CDS"/>
    <property type="molecule type" value="Genomic_DNA"/>
</dbReference>
<dbReference type="Proteomes" id="UP000000859">
    <property type="component" value="Segment"/>
</dbReference>
<dbReference type="GO" id="GO:0008270">
    <property type="term" value="F:zinc ion binding"/>
    <property type="evidence" value="ECO:0007669"/>
    <property type="project" value="InterPro"/>
</dbReference>
<dbReference type="InterPro" id="IPR010507">
    <property type="entry name" value="Znf_MYM"/>
</dbReference>
<dbReference type="Pfam" id="PF06467">
    <property type="entry name" value="zf-FCS"/>
    <property type="match status" value="1"/>
</dbReference>
<evidence type="ECO:0000305" key="1"/>
<sequence>METNCPNILYLSGITIEECLQSKKTATDTLNTNDDEAEVEKKLPSVFTTVSKWVTHSSFKCWTCHLYFKTVPKFVPTYMRENERGEIEMGVLGNFCSFSCAASYVDVHYTEPKRWEARELLNMLYRFFTSQWISYIKPAPSYTMRKEYGGKLSEEAFISELHTLEESISSKHIFI</sequence>
<gene>
    <name type="ordered locus">Pret-097</name>
</gene>
<keyword id="KW-0426">Late protein</keyword>
<reference key="1">
    <citation type="submission" date="2003-03" db="EMBL/GenBank/DDBJ databases">
        <title>African swine fever virus genomes.</title>
        <authorList>
            <person name="Kutish G.F."/>
            <person name="Rock D.L."/>
        </authorList>
    </citation>
    <scope>NUCLEOTIDE SEQUENCE [GENOMIC DNA]</scope>
</reference>
<protein>
    <recommendedName>
        <fullName>Uncharacterized protein B175L</fullName>
        <shortName>pB175L</shortName>
    </recommendedName>
</protein>
<name>VF175_ASFP4</name>
<feature type="chain" id="PRO_0000373561" description="Uncharacterized protein B175L">
    <location>
        <begin position="1"/>
        <end position="175"/>
    </location>
</feature>
<comment type="induction">
    <text evidence="1">Expressed in the late phase of the viral replicative cycle.</text>
</comment>
<comment type="similarity">
    <text evidence="1">Belongs to the asfivirus B175L family.</text>
</comment>